<keyword id="KW-0210">Decarboxylase</keyword>
<keyword id="KW-0456">Lyase</keyword>
<keyword id="KW-0665">Pyrimidine biosynthesis</keyword>
<accession>A0LYL6</accession>
<feature type="chain" id="PRO_1000138952" description="Orotidine 5'-phosphate decarboxylase">
    <location>
        <begin position="1"/>
        <end position="272"/>
    </location>
</feature>
<feature type="active site" description="Proton donor" evidence="1">
    <location>
        <position position="96"/>
    </location>
</feature>
<reference key="1">
    <citation type="journal article" date="2006" name="Environ. Microbiol.">
        <title>Whole genome analysis of the marine Bacteroidetes'Gramella forsetii' reveals adaptations to degradation of polymeric organic matter.</title>
        <authorList>
            <person name="Bauer M."/>
            <person name="Kube M."/>
            <person name="Teeling H."/>
            <person name="Richter M."/>
            <person name="Lombardot T."/>
            <person name="Allers E."/>
            <person name="Wuerdemann C.A."/>
            <person name="Quast C."/>
            <person name="Kuhl H."/>
            <person name="Knaust F."/>
            <person name="Woebken D."/>
            <person name="Bischof K."/>
            <person name="Mussmann M."/>
            <person name="Choudhuri J.V."/>
            <person name="Meyer F."/>
            <person name="Reinhardt R."/>
            <person name="Amann R.I."/>
            <person name="Gloeckner F.O."/>
        </authorList>
    </citation>
    <scope>NUCLEOTIDE SEQUENCE [LARGE SCALE GENOMIC DNA]</scope>
    <source>
        <strain>DSM 17595 / CGMCC 1.15422 / KT0803</strain>
    </source>
</reference>
<organism>
    <name type="scientific">Christiangramia forsetii (strain DSM 17595 / CGMCC 1.15422 / KT0803)</name>
    <name type="common">Gramella forsetii</name>
    <dbReference type="NCBI Taxonomy" id="411154"/>
    <lineage>
        <taxon>Bacteria</taxon>
        <taxon>Pseudomonadati</taxon>
        <taxon>Bacteroidota</taxon>
        <taxon>Flavobacteriia</taxon>
        <taxon>Flavobacteriales</taxon>
        <taxon>Flavobacteriaceae</taxon>
        <taxon>Christiangramia</taxon>
    </lineage>
</organism>
<protein>
    <recommendedName>
        <fullName evidence="1">Orotidine 5'-phosphate decarboxylase</fullName>
        <ecNumber evidence="1">4.1.1.23</ecNumber>
    </recommendedName>
    <alternativeName>
        <fullName evidence="1">OMP decarboxylase</fullName>
        <shortName evidence="1">OMPDCase</shortName>
        <shortName evidence="1">OMPdecase</shortName>
    </alternativeName>
</protein>
<proteinExistence type="inferred from homology"/>
<dbReference type="EC" id="4.1.1.23" evidence="1"/>
<dbReference type="EMBL" id="CU207366">
    <property type="protein sequence ID" value="CAL65461.1"/>
    <property type="molecule type" value="Genomic_DNA"/>
</dbReference>
<dbReference type="RefSeq" id="WP_011708399.1">
    <property type="nucleotide sequence ID" value="NC_008571.1"/>
</dbReference>
<dbReference type="SMR" id="A0LYL6"/>
<dbReference type="STRING" id="411154.GFO_0478"/>
<dbReference type="KEGG" id="gfo:GFO_0478"/>
<dbReference type="eggNOG" id="COG0284">
    <property type="taxonomic scope" value="Bacteria"/>
</dbReference>
<dbReference type="HOGENOM" id="CLU_060704_1_0_10"/>
<dbReference type="OrthoDB" id="9808470at2"/>
<dbReference type="UniPathway" id="UPA00070">
    <property type="reaction ID" value="UER00120"/>
</dbReference>
<dbReference type="Proteomes" id="UP000000755">
    <property type="component" value="Chromosome"/>
</dbReference>
<dbReference type="GO" id="GO:0004590">
    <property type="term" value="F:orotidine-5'-phosphate decarboxylase activity"/>
    <property type="evidence" value="ECO:0007669"/>
    <property type="project" value="UniProtKB-UniRule"/>
</dbReference>
<dbReference type="GO" id="GO:0006207">
    <property type="term" value="P:'de novo' pyrimidine nucleobase biosynthetic process"/>
    <property type="evidence" value="ECO:0007669"/>
    <property type="project" value="InterPro"/>
</dbReference>
<dbReference type="GO" id="GO:0044205">
    <property type="term" value="P:'de novo' UMP biosynthetic process"/>
    <property type="evidence" value="ECO:0007669"/>
    <property type="project" value="UniProtKB-UniRule"/>
</dbReference>
<dbReference type="CDD" id="cd04725">
    <property type="entry name" value="OMP_decarboxylase_like"/>
    <property type="match status" value="1"/>
</dbReference>
<dbReference type="FunFam" id="3.20.20.70:FF:000157">
    <property type="entry name" value="Orotidine 5'-phosphate decarboxylase"/>
    <property type="match status" value="1"/>
</dbReference>
<dbReference type="Gene3D" id="3.20.20.70">
    <property type="entry name" value="Aldolase class I"/>
    <property type="match status" value="1"/>
</dbReference>
<dbReference type="HAMAP" id="MF_01215">
    <property type="entry name" value="OMPdecase_type2"/>
    <property type="match status" value="1"/>
</dbReference>
<dbReference type="InterPro" id="IPR013785">
    <property type="entry name" value="Aldolase_TIM"/>
</dbReference>
<dbReference type="InterPro" id="IPR011995">
    <property type="entry name" value="OMPdecase_type-2"/>
</dbReference>
<dbReference type="InterPro" id="IPR001754">
    <property type="entry name" value="OMPdeCOase_dom"/>
</dbReference>
<dbReference type="InterPro" id="IPR011060">
    <property type="entry name" value="RibuloseP-bd_barrel"/>
</dbReference>
<dbReference type="NCBIfam" id="TIGR02127">
    <property type="entry name" value="pyrF_sub2"/>
    <property type="match status" value="1"/>
</dbReference>
<dbReference type="PANTHER" id="PTHR43375">
    <property type="entry name" value="OROTIDINE 5'-PHOSPHATE DECARBOXYLASE"/>
    <property type="match status" value="1"/>
</dbReference>
<dbReference type="PANTHER" id="PTHR43375:SF1">
    <property type="entry name" value="OROTIDINE 5'-PHOSPHATE DECARBOXYLASE"/>
    <property type="match status" value="1"/>
</dbReference>
<dbReference type="Pfam" id="PF00215">
    <property type="entry name" value="OMPdecase"/>
    <property type="match status" value="1"/>
</dbReference>
<dbReference type="SMART" id="SM00934">
    <property type="entry name" value="OMPdecase"/>
    <property type="match status" value="1"/>
</dbReference>
<dbReference type="SUPFAM" id="SSF51366">
    <property type="entry name" value="Ribulose-phoshate binding barrel"/>
    <property type="match status" value="1"/>
</dbReference>
<sequence>MTSQELTEQILKKQSFLCVGLDTDLDKIPTYLLSEKDPVFSFNKAIIDATHQYCVAYKPNIAFYEAIGVDGWKALKKTIEYLHAEYPDLYTIADAKRGDIGNTSRMYAKAFFEDLGFDSITVAPYMGKDSVEPFLEFTNKHTILLALTSNEGAFDFQTLKTGDKELYKKVIETSKNWQNSENLMYVVGATKAEYLAEIRKIIPENFLLVPGVGAQGGSLEEVCKYGMTKNVGLLINSSRKIIYASDSSNFAEIAGAKAEAMQNQMASELEKL</sequence>
<name>PYRF_CHRFK</name>
<comment type="catalytic activity">
    <reaction evidence="1">
        <text>orotidine 5'-phosphate + H(+) = UMP + CO2</text>
        <dbReference type="Rhea" id="RHEA:11596"/>
        <dbReference type="ChEBI" id="CHEBI:15378"/>
        <dbReference type="ChEBI" id="CHEBI:16526"/>
        <dbReference type="ChEBI" id="CHEBI:57538"/>
        <dbReference type="ChEBI" id="CHEBI:57865"/>
        <dbReference type="EC" id="4.1.1.23"/>
    </reaction>
</comment>
<comment type="pathway">
    <text evidence="1">Pyrimidine metabolism; UMP biosynthesis via de novo pathway; UMP from orotate: step 2/2.</text>
</comment>
<comment type="similarity">
    <text evidence="1">Belongs to the OMP decarboxylase family. Type 2 subfamily.</text>
</comment>
<gene>
    <name evidence="1" type="primary">pyrF</name>
    <name type="ordered locus">GFO_0478</name>
</gene>
<evidence type="ECO:0000255" key="1">
    <source>
        <dbReference type="HAMAP-Rule" id="MF_01215"/>
    </source>
</evidence>